<proteinExistence type="evidence at transcript level"/>
<keyword id="KW-0119">Carbohydrate metabolism</keyword>
<keyword id="KW-0294">Fucose metabolism</keyword>
<keyword id="KW-0325">Glycoprotein</keyword>
<keyword id="KW-0328">Glycosyltransferase</keyword>
<keyword id="KW-0472">Membrane</keyword>
<keyword id="KW-1185">Reference proteome</keyword>
<keyword id="KW-0735">Signal-anchor</keyword>
<keyword id="KW-0808">Transferase</keyword>
<keyword id="KW-0812">Transmembrane</keyword>
<keyword id="KW-1133">Transmembrane helix</keyword>
<dbReference type="EC" id="2.4.1.-" evidence="6"/>
<dbReference type="EMBL" id="KJ138644">
    <property type="protein sequence ID" value="AHL38584.1"/>
    <property type="molecule type" value="mRNA"/>
</dbReference>
<dbReference type="EMBL" id="AB012248">
    <property type="protein sequence ID" value="BAB09461.1"/>
    <property type="molecule type" value="Genomic_DNA"/>
</dbReference>
<dbReference type="EMBL" id="CP002688">
    <property type="protein sequence ID" value="AED95941.1"/>
    <property type="molecule type" value="Genomic_DNA"/>
</dbReference>
<dbReference type="EMBL" id="BT030356">
    <property type="protein sequence ID" value="ABO38769.1"/>
    <property type="molecule type" value="mRNA"/>
</dbReference>
<dbReference type="EMBL" id="AY088561">
    <property type="protein sequence ID" value="AAM66093.1"/>
    <property type="molecule type" value="mRNA"/>
</dbReference>
<dbReference type="RefSeq" id="NP_199853.1">
    <property type="nucleotide sequence ID" value="NM_124424.4"/>
</dbReference>
<dbReference type="SMR" id="Q9FK30"/>
<dbReference type="FunCoup" id="Q9FK30">
    <property type="interactions" value="1314"/>
</dbReference>
<dbReference type="STRING" id="3702.Q9FK30"/>
<dbReference type="GlyCosmos" id="Q9FK30">
    <property type="glycosylation" value="5 sites, No reported glycans"/>
</dbReference>
<dbReference type="GlyGen" id="Q9FK30">
    <property type="glycosylation" value="5 sites"/>
</dbReference>
<dbReference type="iPTMnet" id="Q9FK30"/>
<dbReference type="PaxDb" id="3702-AT5G50420.1"/>
<dbReference type="ProteomicsDB" id="250799"/>
<dbReference type="EnsemblPlants" id="AT5G50420.1">
    <property type="protein sequence ID" value="AT5G50420.1"/>
    <property type="gene ID" value="AT5G50420"/>
</dbReference>
<dbReference type="GeneID" id="835110"/>
<dbReference type="Gramene" id="AT5G50420.1">
    <property type="protein sequence ID" value="AT5G50420.1"/>
    <property type="gene ID" value="AT5G50420"/>
</dbReference>
<dbReference type="KEGG" id="ath:AT5G50420"/>
<dbReference type="Araport" id="AT5G50420"/>
<dbReference type="TAIR" id="AT5G50420"/>
<dbReference type="eggNOG" id="ENOG502QS4M">
    <property type="taxonomic scope" value="Eukaryota"/>
</dbReference>
<dbReference type="HOGENOM" id="CLU_039118_0_0_1"/>
<dbReference type="InParanoid" id="Q9FK30"/>
<dbReference type="OMA" id="ANLYERC"/>
<dbReference type="OrthoDB" id="422368at2759"/>
<dbReference type="PRO" id="PR:Q9FK30"/>
<dbReference type="Proteomes" id="UP000006548">
    <property type="component" value="Chromosome 5"/>
</dbReference>
<dbReference type="ExpressionAtlas" id="Q9FK30">
    <property type="expression patterns" value="baseline and differential"/>
</dbReference>
<dbReference type="GO" id="GO:0016020">
    <property type="term" value="C:membrane"/>
    <property type="evidence" value="ECO:0007669"/>
    <property type="project" value="UniProtKB-SubCell"/>
</dbReference>
<dbReference type="GO" id="GO:0046922">
    <property type="term" value="F:peptide-O-fucosyltransferase activity"/>
    <property type="evidence" value="ECO:0007669"/>
    <property type="project" value="InterPro"/>
</dbReference>
<dbReference type="GO" id="GO:0006004">
    <property type="term" value="P:fucose metabolic process"/>
    <property type="evidence" value="ECO:0007669"/>
    <property type="project" value="UniProtKB-KW"/>
</dbReference>
<dbReference type="CDD" id="cd11296">
    <property type="entry name" value="O-FucT_like"/>
    <property type="match status" value="1"/>
</dbReference>
<dbReference type="FunFam" id="3.40.50.11350:FF:000005">
    <property type="entry name" value="O-fucosyltransferase family protein"/>
    <property type="match status" value="1"/>
</dbReference>
<dbReference type="Gene3D" id="3.40.50.11350">
    <property type="match status" value="1"/>
</dbReference>
<dbReference type="InterPro" id="IPR045130">
    <property type="entry name" value="OFUT2-like"/>
</dbReference>
<dbReference type="PANTHER" id="PTHR13398">
    <property type="entry name" value="GDP-FUCOSE PROTEIN O-FUCOSYLTRANSFERASE 2"/>
    <property type="match status" value="1"/>
</dbReference>
<dbReference type="PANTHER" id="PTHR13398:SF7">
    <property type="entry name" value="O-FUCOSYLTRANSFERASE 36"/>
    <property type="match status" value="1"/>
</dbReference>
<name>OFT36_ARATH</name>
<comment type="pathway">
    <text evidence="6">Glycan metabolism.</text>
</comment>
<comment type="subcellular location">
    <subcellularLocation>
        <location evidence="2">Membrane</location>
        <topology evidence="6">Single-pass type II membrane protein</topology>
    </subcellularLocation>
</comment>
<comment type="similarity">
    <text evidence="6">Belongs to the glycosyltransferase GT106 family.</text>
</comment>
<gene>
    <name evidence="6" type="primary">OFUT36</name>
    <name evidence="5 8" type="synonym">GT68</name>
    <name evidence="7" type="ordered locus">At5g50420</name>
    <name evidence="9" type="ORF">MXI22.14</name>
</gene>
<reference key="1">
    <citation type="journal article" date="2014" name="Plant J.">
        <title>The plant glycosyltransferase clone collection for functional genomics.</title>
        <authorList>
            <person name="Lao J."/>
            <person name="Oikawa A."/>
            <person name="Bromley J.R."/>
            <person name="McInerney P."/>
            <person name="Suttangkakul A."/>
            <person name="Smith-Moritz A.M."/>
            <person name="Plahar H."/>
            <person name="Chiu T.-Y."/>
            <person name="Gonzalez Fernandez-Nino S.M.G."/>
            <person name="Ebert B."/>
            <person name="Yang F."/>
            <person name="Christiansen K.M."/>
            <person name="Hansen S.F."/>
            <person name="Stonebloom S."/>
            <person name="Adams P.D."/>
            <person name="Ronald P.C."/>
            <person name="Hillson N.J."/>
            <person name="Hadi M.Z."/>
            <person name="Vega-Sanchez M.E."/>
            <person name="Loque D."/>
            <person name="Scheller H.V."/>
            <person name="Heazlewood J.L."/>
        </authorList>
    </citation>
    <scope>NUCLEOTIDE SEQUENCE [MRNA]</scope>
    <scope>WEB RESOURCE</scope>
    <source>
        <strain>cv. Columbia</strain>
    </source>
</reference>
<reference key="2">
    <citation type="journal article" date="1998" name="DNA Res.">
        <title>Structural analysis of Arabidopsis thaliana chromosome 5. VI. Sequence features of the regions of 1,367,185 bp covered by 19 physically assigned P1 and TAC clones.</title>
        <authorList>
            <person name="Kotani H."/>
            <person name="Nakamura Y."/>
            <person name="Sato S."/>
            <person name="Asamizu E."/>
            <person name="Kaneko T."/>
            <person name="Miyajima N."/>
            <person name="Tabata S."/>
        </authorList>
    </citation>
    <scope>NUCLEOTIDE SEQUENCE [LARGE SCALE GENOMIC DNA]</scope>
    <source>
        <strain>cv. Columbia</strain>
    </source>
</reference>
<reference key="3">
    <citation type="journal article" date="2017" name="Plant J.">
        <title>Araport11: a complete reannotation of the Arabidopsis thaliana reference genome.</title>
        <authorList>
            <person name="Cheng C.Y."/>
            <person name="Krishnakumar V."/>
            <person name="Chan A.P."/>
            <person name="Thibaud-Nissen F."/>
            <person name="Schobel S."/>
            <person name="Town C.D."/>
        </authorList>
    </citation>
    <scope>GENOME REANNOTATION</scope>
    <source>
        <strain>cv. Columbia</strain>
    </source>
</reference>
<reference key="4">
    <citation type="submission" date="2007-03" db="EMBL/GenBank/DDBJ databases">
        <title>Arabidopsis ORF clones.</title>
        <authorList>
            <person name="Bautista V.R."/>
            <person name="Kim C.J."/>
            <person name="Chen H."/>
            <person name="Wu S.Y."/>
            <person name="De Los Reyes C."/>
            <person name="Ecker J.R."/>
        </authorList>
    </citation>
    <scope>NUCLEOTIDE SEQUENCE [LARGE SCALE MRNA]</scope>
    <source>
        <strain>cv. Columbia</strain>
    </source>
</reference>
<reference key="5">
    <citation type="submission" date="2002-03" db="EMBL/GenBank/DDBJ databases">
        <title>Full-length cDNA from Arabidopsis thaliana.</title>
        <authorList>
            <person name="Brover V.V."/>
            <person name="Troukhan M.E."/>
            <person name="Alexandrov N.A."/>
            <person name="Lu Y.-P."/>
            <person name="Flavell R.B."/>
            <person name="Feldmann K.A."/>
        </authorList>
    </citation>
    <scope>NUCLEOTIDE SEQUENCE [LARGE SCALE MRNA]</scope>
</reference>
<reference key="6">
    <citation type="journal article" date="2012" name="Front. Plant Sci.">
        <title>Plant glycosyltransferases beyond CAZy: a perspective on DUF families.</title>
        <authorList>
            <person name="Hansen S.F."/>
            <person name="Harholt J."/>
            <person name="Oikawa A."/>
            <person name="Scheller H.V."/>
        </authorList>
    </citation>
    <scope>REVIEW</scope>
</reference>
<reference key="7">
    <citation type="journal article" date="2012" name="PLoS ONE">
        <title>Identification of putative rhamnogalacturonan-II specific glycosyltransferases in Arabidopsis using a combination of bioinformatics approaches.</title>
        <authorList>
            <person name="Voxeur A."/>
            <person name="Andre A."/>
            <person name="Breton C."/>
            <person name="Lerouge P."/>
        </authorList>
    </citation>
    <scope>GENE FAMILY</scope>
</reference>
<reference key="8">
    <citation type="journal article" date="2013" name="Plant J.">
        <title>Identification of an additional protein involved in mannan biosynthesis.</title>
        <authorList>
            <person name="Wang Y."/>
            <person name="Mortimer J.C."/>
            <person name="Davis J."/>
            <person name="Dupree P."/>
            <person name="Keegstra K."/>
        </authorList>
    </citation>
    <scope>GENE FAMILY</scope>
</reference>
<protein>
    <recommendedName>
        <fullName evidence="6">O-fucosyltransferase 36</fullName>
        <shortName evidence="6">O-FucT-36</shortName>
        <ecNumber evidence="6">2.4.1.-</ecNumber>
    </recommendedName>
    <alternativeName>
        <fullName evidence="6">O-fucosyltransferase family protein</fullName>
    </alternativeName>
</protein>
<accession>Q9FK30</accession>
<accession>Q8L9A2</accession>
<organism>
    <name type="scientific">Arabidopsis thaliana</name>
    <name type="common">Mouse-ear cress</name>
    <dbReference type="NCBI Taxonomy" id="3702"/>
    <lineage>
        <taxon>Eukaryota</taxon>
        <taxon>Viridiplantae</taxon>
        <taxon>Streptophyta</taxon>
        <taxon>Embryophyta</taxon>
        <taxon>Tracheophyta</taxon>
        <taxon>Spermatophyta</taxon>
        <taxon>Magnoliopsida</taxon>
        <taxon>eudicotyledons</taxon>
        <taxon>Gunneridae</taxon>
        <taxon>Pentapetalae</taxon>
        <taxon>rosids</taxon>
        <taxon>malvids</taxon>
        <taxon>Brassicales</taxon>
        <taxon>Brassicaceae</taxon>
        <taxon>Camelineae</taxon>
        <taxon>Arabidopsis</taxon>
    </lineage>
</organism>
<evidence type="ECO:0000250" key="1">
    <source>
        <dbReference type="UniProtKB" id="Q9Y2G5"/>
    </source>
</evidence>
<evidence type="ECO:0000255" key="2"/>
<evidence type="ECO:0000255" key="3">
    <source>
        <dbReference type="PROSITE-ProRule" id="PRU00498"/>
    </source>
</evidence>
<evidence type="ECO:0000256" key="4">
    <source>
        <dbReference type="SAM" id="MobiDB-lite"/>
    </source>
</evidence>
<evidence type="ECO:0000303" key="5">
    <source>
    </source>
</evidence>
<evidence type="ECO:0000305" key="6"/>
<evidence type="ECO:0000312" key="7">
    <source>
        <dbReference type="Araport" id="AT5G50420"/>
    </source>
</evidence>
<evidence type="ECO:0000312" key="8">
    <source>
        <dbReference type="EMBL" id="AHL38584.1"/>
    </source>
</evidence>
<evidence type="ECO:0000312" key="9">
    <source>
        <dbReference type="EMBL" id="BAB09461.1"/>
    </source>
</evidence>
<feature type="chain" id="PRO_0000442098" description="O-fucosyltransferase 36">
    <location>
        <begin position="1"/>
        <end position="566"/>
    </location>
</feature>
<feature type="transmembrane region" description="Helical; Signal-anchor for type II membrane protein" evidence="6">
    <location>
        <begin position="66"/>
        <end position="86"/>
    </location>
</feature>
<feature type="region of interest" description="Disordered" evidence="4">
    <location>
        <begin position="1"/>
        <end position="37"/>
    </location>
</feature>
<feature type="compositionally biased region" description="Basic and acidic residues" evidence="4">
    <location>
        <begin position="1"/>
        <end position="14"/>
    </location>
</feature>
<feature type="binding site" evidence="1">
    <location>
        <begin position="415"/>
        <end position="417"/>
    </location>
    <ligand>
        <name>substrate</name>
    </ligand>
</feature>
<feature type="binding site" evidence="1">
    <location>
        <begin position="531"/>
        <end position="532"/>
    </location>
    <ligand>
        <name>substrate</name>
    </ligand>
</feature>
<feature type="glycosylation site" description="N-linked (GlcNAc...) asparagine" evidence="3">
    <location>
        <position position="93"/>
    </location>
</feature>
<feature type="glycosylation site" description="N-linked (GlcNAc...) asparagine" evidence="3">
    <location>
        <position position="129"/>
    </location>
</feature>
<feature type="glycosylation site" description="N-linked (GlcNAc...) asparagine" evidence="3">
    <location>
        <position position="138"/>
    </location>
</feature>
<feature type="glycosylation site" description="N-linked (GlcNAc...) asparagine" evidence="3">
    <location>
        <position position="179"/>
    </location>
</feature>
<feature type="glycosylation site" description="N-linked (GlcNAc...) asparagine" evidence="3">
    <location>
        <position position="190"/>
    </location>
</feature>
<feature type="sequence conflict" description="In Ref. 5; AAM66093." evidence="6" ref="5">
    <original>I</original>
    <variation>L</variation>
    <location>
        <position position="233"/>
    </location>
</feature>
<sequence length="566" mass="64411">MERNSSDDEEDHQHLIPQNDTRIRHREDSVSSNATTIGGNQRSAFQIDDILHRVQHRGKISLNKRYVIVFVSLIISIGLLFLLTDPRELFAANFSSFKLDPLSNRVKESELRALYLLRQQQLALLSLWNGTLVNPSLNQSENALGSSVLFEDVKSAVSKQISLNKEIQEVLLSPHRSSNYSGGTDVDSVNFSYNRCRKVDQKLSDRKTVEWKPRSDKFLFAICLSGQMSNHLICLEKHMFFAALLDRVLVIPSSKFDYQYDRVIDIERINTCLGRNVVVAFDQFKEKAKKNHFRIDRFICYFSSPQLCYVDEEHIKKLKGLGISIDGKLEAPWSEDIKKPSKRTVQDVQMKFKSDDDVIAIGDVFYADMEQDWVMQPGGPINHKCKTLIEPSKLILLTAQRFIQTFLGKNFIALHFRRHGFLKFCNAKSPSCFYPIPQAAECIARIVERSNGAVIYLSTDAAESETSLLQSLVVVDGKIVPLVKRPPRNSAEKWDALLYRHGIEDDSQVDAMLDKTICAMSSVFIGASGSTFTEDILRLRKDWGTSSTCDEYLCRGEEPNFIAEDE</sequence>